<keyword id="KW-0067">ATP-binding</keyword>
<keyword id="KW-0227">DNA damage</keyword>
<keyword id="KW-0234">DNA repair</keyword>
<keyword id="KW-0238">DNA-binding</keyword>
<keyword id="KW-0547">Nucleotide-binding</keyword>
<keyword id="KW-1185">Reference proteome</keyword>
<organism>
    <name type="scientific">Dichelobacter nodosus (strain VCS1703A)</name>
    <dbReference type="NCBI Taxonomy" id="246195"/>
    <lineage>
        <taxon>Bacteria</taxon>
        <taxon>Pseudomonadati</taxon>
        <taxon>Pseudomonadota</taxon>
        <taxon>Gammaproteobacteria</taxon>
        <taxon>Cardiobacteriales</taxon>
        <taxon>Cardiobacteriaceae</taxon>
        <taxon>Dichelobacter</taxon>
    </lineage>
</organism>
<name>MUTS_DICNV</name>
<dbReference type="EMBL" id="CP000513">
    <property type="protein sequence ID" value="ABQ13473.1"/>
    <property type="molecule type" value="Genomic_DNA"/>
</dbReference>
<dbReference type="RefSeq" id="WP_012031593.1">
    <property type="nucleotide sequence ID" value="NC_009446.1"/>
</dbReference>
<dbReference type="SMR" id="A5EX62"/>
<dbReference type="STRING" id="246195.DNO_1303"/>
<dbReference type="KEGG" id="dno:DNO_1303"/>
<dbReference type="eggNOG" id="COG0249">
    <property type="taxonomic scope" value="Bacteria"/>
</dbReference>
<dbReference type="HOGENOM" id="CLU_002472_4_0_6"/>
<dbReference type="OrthoDB" id="9802448at2"/>
<dbReference type="Proteomes" id="UP000000248">
    <property type="component" value="Chromosome"/>
</dbReference>
<dbReference type="GO" id="GO:0005829">
    <property type="term" value="C:cytosol"/>
    <property type="evidence" value="ECO:0007669"/>
    <property type="project" value="TreeGrafter"/>
</dbReference>
<dbReference type="GO" id="GO:0005524">
    <property type="term" value="F:ATP binding"/>
    <property type="evidence" value="ECO:0007669"/>
    <property type="project" value="UniProtKB-UniRule"/>
</dbReference>
<dbReference type="GO" id="GO:0140664">
    <property type="term" value="F:ATP-dependent DNA damage sensor activity"/>
    <property type="evidence" value="ECO:0007669"/>
    <property type="project" value="InterPro"/>
</dbReference>
<dbReference type="GO" id="GO:0003684">
    <property type="term" value="F:damaged DNA binding"/>
    <property type="evidence" value="ECO:0007669"/>
    <property type="project" value="UniProtKB-UniRule"/>
</dbReference>
<dbReference type="GO" id="GO:0030983">
    <property type="term" value="F:mismatched DNA binding"/>
    <property type="evidence" value="ECO:0007669"/>
    <property type="project" value="InterPro"/>
</dbReference>
<dbReference type="GO" id="GO:0006298">
    <property type="term" value="P:mismatch repair"/>
    <property type="evidence" value="ECO:0007669"/>
    <property type="project" value="UniProtKB-UniRule"/>
</dbReference>
<dbReference type="CDD" id="cd03284">
    <property type="entry name" value="ABC_MutS1"/>
    <property type="match status" value="1"/>
</dbReference>
<dbReference type="FunFam" id="1.10.1420.10:FF:000001">
    <property type="entry name" value="DNA mismatch repair protein MutS"/>
    <property type="match status" value="1"/>
</dbReference>
<dbReference type="FunFam" id="3.40.1170.10:FF:000001">
    <property type="entry name" value="DNA mismatch repair protein MutS"/>
    <property type="match status" value="1"/>
</dbReference>
<dbReference type="FunFam" id="3.40.50.300:FF:000870">
    <property type="entry name" value="MutS protein homolog 4"/>
    <property type="match status" value="1"/>
</dbReference>
<dbReference type="Gene3D" id="1.10.1420.10">
    <property type="match status" value="2"/>
</dbReference>
<dbReference type="Gene3D" id="6.10.140.430">
    <property type="match status" value="1"/>
</dbReference>
<dbReference type="Gene3D" id="3.40.1170.10">
    <property type="entry name" value="DNA repair protein MutS, domain I"/>
    <property type="match status" value="1"/>
</dbReference>
<dbReference type="Gene3D" id="3.30.420.110">
    <property type="entry name" value="MutS, connector domain"/>
    <property type="match status" value="1"/>
</dbReference>
<dbReference type="Gene3D" id="3.40.50.300">
    <property type="entry name" value="P-loop containing nucleotide triphosphate hydrolases"/>
    <property type="match status" value="1"/>
</dbReference>
<dbReference type="HAMAP" id="MF_00096">
    <property type="entry name" value="MutS"/>
    <property type="match status" value="1"/>
</dbReference>
<dbReference type="InterPro" id="IPR005748">
    <property type="entry name" value="DNA_mismatch_repair_MutS"/>
</dbReference>
<dbReference type="InterPro" id="IPR007695">
    <property type="entry name" value="DNA_mismatch_repair_MutS-lik_N"/>
</dbReference>
<dbReference type="InterPro" id="IPR017261">
    <property type="entry name" value="DNA_mismatch_repair_MutS/MSH"/>
</dbReference>
<dbReference type="InterPro" id="IPR000432">
    <property type="entry name" value="DNA_mismatch_repair_MutS_C"/>
</dbReference>
<dbReference type="InterPro" id="IPR007861">
    <property type="entry name" value="DNA_mismatch_repair_MutS_clamp"/>
</dbReference>
<dbReference type="InterPro" id="IPR007696">
    <property type="entry name" value="DNA_mismatch_repair_MutS_core"/>
</dbReference>
<dbReference type="InterPro" id="IPR016151">
    <property type="entry name" value="DNA_mismatch_repair_MutS_N"/>
</dbReference>
<dbReference type="InterPro" id="IPR036187">
    <property type="entry name" value="DNA_mismatch_repair_MutS_sf"/>
</dbReference>
<dbReference type="InterPro" id="IPR007860">
    <property type="entry name" value="DNA_mmatch_repair_MutS_con_dom"/>
</dbReference>
<dbReference type="InterPro" id="IPR045076">
    <property type="entry name" value="MutS"/>
</dbReference>
<dbReference type="InterPro" id="IPR036678">
    <property type="entry name" value="MutS_con_dom_sf"/>
</dbReference>
<dbReference type="InterPro" id="IPR027417">
    <property type="entry name" value="P-loop_NTPase"/>
</dbReference>
<dbReference type="NCBIfam" id="TIGR01070">
    <property type="entry name" value="mutS1"/>
    <property type="match status" value="1"/>
</dbReference>
<dbReference type="NCBIfam" id="NF003810">
    <property type="entry name" value="PRK05399.1"/>
    <property type="match status" value="1"/>
</dbReference>
<dbReference type="PANTHER" id="PTHR11361:SF34">
    <property type="entry name" value="DNA MISMATCH REPAIR PROTEIN MSH1, MITOCHONDRIAL"/>
    <property type="match status" value="1"/>
</dbReference>
<dbReference type="PANTHER" id="PTHR11361">
    <property type="entry name" value="DNA MISMATCH REPAIR PROTEIN MUTS FAMILY MEMBER"/>
    <property type="match status" value="1"/>
</dbReference>
<dbReference type="Pfam" id="PF01624">
    <property type="entry name" value="MutS_I"/>
    <property type="match status" value="1"/>
</dbReference>
<dbReference type="Pfam" id="PF05188">
    <property type="entry name" value="MutS_II"/>
    <property type="match status" value="1"/>
</dbReference>
<dbReference type="Pfam" id="PF05192">
    <property type="entry name" value="MutS_III"/>
    <property type="match status" value="1"/>
</dbReference>
<dbReference type="Pfam" id="PF05190">
    <property type="entry name" value="MutS_IV"/>
    <property type="match status" value="1"/>
</dbReference>
<dbReference type="Pfam" id="PF00488">
    <property type="entry name" value="MutS_V"/>
    <property type="match status" value="1"/>
</dbReference>
<dbReference type="PIRSF" id="PIRSF037677">
    <property type="entry name" value="DNA_mis_repair_Msh6"/>
    <property type="match status" value="1"/>
</dbReference>
<dbReference type="SMART" id="SM00534">
    <property type="entry name" value="MUTSac"/>
    <property type="match status" value="1"/>
</dbReference>
<dbReference type="SMART" id="SM00533">
    <property type="entry name" value="MUTSd"/>
    <property type="match status" value="1"/>
</dbReference>
<dbReference type="SUPFAM" id="SSF55271">
    <property type="entry name" value="DNA repair protein MutS, domain I"/>
    <property type="match status" value="1"/>
</dbReference>
<dbReference type="SUPFAM" id="SSF53150">
    <property type="entry name" value="DNA repair protein MutS, domain II"/>
    <property type="match status" value="1"/>
</dbReference>
<dbReference type="SUPFAM" id="SSF48334">
    <property type="entry name" value="DNA repair protein MutS, domain III"/>
    <property type="match status" value="1"/>
</dbReference>
<dbReference type="SUPFAM" id="SSF52540">
    <property type="entry name" value="P-loop containing nucleoside triphosphate hydrolases"/>
    <property type="match status" value="1"/>
</dbReference>
<dbReference type="PROSITE" id="PS00486">
    <property type="entry name" value="DNA_MISMATCH_REPAIR_2"/>
    <property type="match status" value="1"/>
</dbReference>
<feature type="chain" id="PRO_0000335149" description="DNA mismatch repair protein MutS">
    <location>
        <begin position="1"/>
        <end position="861"/>
    </location>
</feature>
<feature type="binding site" evidence="1">
    <location>
        <begin position="613"/>
        <end position="620"/>
    </location>
    <ligand>
        <name>ATP</name>
        <dbReference type="ChEBI" id="CHEBI:30616"/>
    </ligand>
</feature>
<comment type="function">
    <text evidence="1">This protein is involved in the repair of mismatches in DNA. It is possible that it carries out the mismatch recognition step. This protein has a weak ATPase activity.</text>
</comment>
<comment type="similarity">
    <text evidence="1">Belongs to the DNA mismatch repair MutS family.</text>
</comment>
<accession>A5EX62</accession>
<proteinExistence type="inferred from homology"/>
<reference key="1">
    <citation type="journal article" date="2007" name="Nat. Biotechnol.">
        <title>Genome sequence and identification of candidate vaccine antigens from the animal pathogen Dichelobacter nodosus.</title>
        <authorList>
            <person name="Myers G.S.A."/>
            <person name="Parker D."/>
            <person name="Al-Hasani K."/>
            <person name="Kennan R.M."/>
            <person name="Seemann T."/>
            <person name="Ren Q."/>
            <person name="Badger J.H."/>
            <person name="Selengut J.D."/>
            <person name="Deboy R.T."/>
            <person name="Tettelin H."/>
            <person name="Boyce J.D."/>
            <person name="McCarl V.P."/>
            <person name="Han X."/>
            <person name="Nelson W.C."/>
            <person name="Madupu R."/>
            <person name="Mohamoud Y."/>
            <person name="Holley T."/>
            <person name="Fedorova N."/>
            <person name="Khouri H."/>
            <person name="Bottomley S.P."/>
            <person name="Whittington R.J."/>
            <person name="Adler B."/>
            <person name="Songer J.G."/>
            <person name="Rood J.I."/>
            <person name="Paulsen I.T."/>
        </authorList>
    </citation>
    <scope>NUCLEOTIDE SEQUENCE [LARGE SCALE GENOMIC DNA]</scope>
    <source>
        <strain>VCS1703A</strain>
    </source>
</reference>
<gene>
    <name evidence="1" type="primary">mutS</name>
    <name type="ordered locus">DNO_1303</name>
</gene>
<sequence>MNTKISEHTPAMQQYLTIKEDFPDLLLFYRMGDFYELFFDDAKKAGALLNITVTARGKIRGKPIPMAGVPAHALENYLAKLVKQGMSAVICEQVGEVGKGLVERAVTRIITPGTLTDENLLDEARDSILLSLFCFQNNYFFAYADITRGDFQLTMGLNEQELQSEIERLRPAEILMPETANVPAFITALKPHRQPDWYFDSDSSYRLICEYYQTTTIDGFGIAPDDPALSAAGCLLQYLHDTHKYHLPPLKPLQKQHDHQYLLLDATTRRNLELEYTLNGESKHSLIATINRCSTAAGVRTLKRWINQPLIQHEYILERQEAVTALLTHADLDEIAKTLRATADIERITTRIALQTAKPRELAQLRDTLMQLPAINALLQTSAAHSPLLAAATQALMHCPQLGDLLMKALVEAPPLTLKEGGIFAAGYLPELDALHELTDHSAQLLEKMEQEEKAQTGLNTLKIGFNRVHGYYIDIPRSQAANAPAHWIRRQTLKNSERYVTESLKTLEERLLNAQDEALALEKQAYTELLITLDKQRDDLYRLATALAESDVLTCFARLAKEHHYCRPQFSNQIEIQITAGRHPVVEQLSAQPFIANDLVLHQKRQLLILTGPNMGGKSTYMRQTALIVILALAGSYVPAKEARIGRINRIFTRIGASDDLAGGRSTFMVEMTETANILNNADEHSLVIMDEIGRGTSTFDGLSLAWAVADHLLQKNRALTLFATHYFELTALVERHQHGANIHLSAAEDQEHIVFLYHIEEGATSKSYGLHVAKLAGVPQAVIHNANAKLRQLEEKRVPQRAHQALLPIESQKPSLSPQIKNILQQIQEINPDELSPKAAHEWLYQLKTLVRDLDKNEL</sequence>
<protein>
    <recommendedName>
        <fullName evidence="1">DNA mismatch repair protein MutS</fullName>
    </recommendedName>
</protein>
<evidence type="ECO:0000255" key="1">
    <source>
        <dbReference type="HAMAP-Rule" id="MF_00096"/>
    </source>
</evidence>